<keyword id="KW-0891">Chondrogenesis</keyword>
<keyword id="KW-0217">Developmental protein</keyword>
<keyword id="KW-0221">Differentiation</keyword>
<keyword id="KW-1015">Disulfide bond</keyword>
<keyword id="KW-0325">Glycoprotein</keyword>
<keyword id="KW-1185">Reference proteome</keyword>
<keyword id="KW-0964">Secreted</keyword>
<keyword id="KW-0732">Signal</keyword>
<feature type="signal peptide" evidence="2">
    <location>
        <begin position="1"/>
        <end position="23"/>
    </location>
</feature>
<feature type="chain" id="PRO_0000019819" description="Noggin-3">
    <location>
        <begin position="24"/>
        <end position="223"/>
    </location>
</feature>
<feature type="glycosylation site" description="N-linked (GlcNAc...) asparagine" evidence="2">
    <location>
        <position position="60"/>
    </location>
</feature>
<feature type="glycosylation site" description="N-linked (GlcNAc...) asparagine" evidence="2">
    <location>
        <position position="93"/>
    </location>
</feature>
<proteinExistence type="evidence at protein level"/>
<sequence length="223" mass="26029">MDNIPYFLATVLIFSLGFRIEEGMCQHYYLLRPIPSDSLPIVELKEDPDPVLDPKERDLNETELRAILGSHFEQNFMSINPPEDKHAGQDELNESELMKQRPNGIMPKEIKAMEFDIQHGKKHKPSKKLRRRLQLWLWSYTFCPVVHTWQDLGNRFWPRYLKVGSCYNKRSCSVPEGMVCKPPKSSHLTVLRWRCVQRKGGLKCAWIPVQYPVISECKCSCPN</sequence>
<reference key="1">
    <citation type="journal article" date="1998" name="Dev. Biol.">
        <title>Follistatin and noggin are excluded from the zebrafish organizer.</title>
        <authorList>
            <person name="Bauer H."/>
            <person name="Meier A."/>
            <person name="Hild M."/>
            <person name="Stachel S."/>
            <person name="Economides A."/>
            <person name="Hazelett D."/>
            <person name="Harland R.M."/>
            <person name="Hammerschmidt M."/>
        </authorList>
    </citation>
    <scope>NUCLEOTIDE SEQUENCE [MRNA]</scope>
    <scope>CHARACTERIZATION</scope>
</reference>
<reference key="2">
    <citation type="journal article" date="1999" name="Dev. Biol.">
        <title>Three different noggin genes antagonize the activity of bone morphogenetic proteins in the zebrafish embryo.</title>
        <authorList>
            <person name="Fuerthauer M."/>
            <person name="Thisse B."/>
            <person name="Thisse C."/>
        </authorList>
    </citation>
    <scope>NUCLEOTIDE SEQUENCE [MRNA]</scope>
</reference>
<gene>
    <name type="primary">nog3</name>
</gene>
<protein>
    <recommendedName>
        <fullName>Noggin-3</fullName>
    </recommendedName>
</protein>
<accession>Q9YHV3</accession>
<organism>
    <name type="scientific">Danio rerio</name>
    <name type="common">Zebrafish</name>
    <name type="synonym">Brachydanio rerio</name>
    <dbReference type="NCBI Taxonomy" id="7955"/>
    <lineage>
        <taxon>Eukaryota</taxon>
        <taxon>Metazoa</taxon>
        <taxon>Chordata</taxon>
        <taxon>Craniata</taxon>
        <taxon>Vertebrata</taxon>
        <taxon>Euteleostomi</taxon>
        <taxon>Actinopterygii</taxon>
        <taxon>Neopterygii</taxon>
        <taxon>Teleostei</taxon>
        <taxon>Ostariophysi</taxon>
        <taxon>Cypriniformes</taxon>
        <taxon>Danionidae</taxon>
        <taxon>Danioninae</taxon>
        <taxon>Danio</taxon>
    </lineage>
</organism>
<name>NOGG3_DANRE</name>
<evidence type="ECO:0000250" key="1"/>
<evidence type="ECO:0000255" key="2"/>
<evidence type="ECO:0000305" key="3"/>
<comment type="function">
    <text>May function as an inhibitor of bone morphogenetic proteins (BMP) signaling during later stages of development including late phases of dorsoventral patterning, to refine the early pattern set up by the interaction of chordino and BMP2/4. Not involved in organizer function or early phases of dorsoventral pattern formation.</text>
</comment>
<comment type="subunit">
    <text evidence="1">Homodimer; disulfide-linked.</text>
</comment>
<comment type="subcellular location">
    <subcellularLocation>
        <location>Secreted</location>
    </subcellularLocation>
</comment>
<comment type="developmental stage">
    <text>Expression is limited to late stages of embryogenesis. First detected at 48 hours of development and restricted to regions of ongoing chondrogenesis. Expression is observed in the ethmoid plate and the trabeculae cranii of the neurocranium as well as in some presumptive cartilage cells of the pharyngeal arches. Expression is furthermore observed in the forming cartilage of the pectoral fins. At 72 hours of development, accumulates in the ceratobranchial and basibranchial parts of the gill arches.</text>
</comment>
<comment type="similarity">
    <text evidence="3">Belongs to the noggin family.</text>
</comment>
<dbReference type="EMBL" id="AF084949">
    <property type="protein sequence ID" value="AAD09176.1"/>
    <property type="molecule type" value="mRNA"/>
</dbReference>
<dbReference type="RefSeq" id="NP_571057.1">
    <property type="nucleotide sequence ID" value="NM_130982.1"/>
</dbReference>
<dbReference type="SMR" id="Q9YHV3"/>
<dbReference type="FunCoup" id="Q9YHV3">
    <property type="interactions" value="294"/>
</dbReference>
<dbReference type="STRING" id="7955.ENSDARP00000070050"/>
<dbReference type="GlyCosmos" id="Q9YHV3">
    <property type="glycosylation" value="2 sites, No reported glycans"/>
</dbReference>
<dbReference type="PaxDb" id="7955-ENSDARP00000103662"/>
<dbReference type="GeneID" id="30173"/>
<dbReference type="KEGG" id="dre:30173"/>
<dbReference type="AGR" id="ZFIN:ZDB-GENE-990714-8"/>
<dbReference type="CTD" id="30173"/>
<dbReference type="ZFIN" id="ZDB-GENE-990714-8">
    <property type="gene designation" value="nog3"/>
</dbReference>
<dbReference type="eggNOG" id="KOG4485">
    <property type="taxonomic scope" value="Eukaryota"/>
</dbReference>
<dbReference type="InParanoid" id="Q9YHV3"/>
<dbReference type="OrthoDB" id="5950649at2759"/>
<dbReference type="PhylomeDB" id="Q9YHV3"/>
<dbReference type="Reactome" id="R-DRE-201451">
    <property type="pathway name" value="Signaling by BMP"/>
</dbReference>
<dbReference type="PRO" id="PR:Q9YHV3"/>
<dbReference type="Proteomes" id="UP000000437">
    <property type="component" value="Alternate scaffold 12"/>
</dbReference>
<dbReference type="Proteomes" id="UP000000437">
    <property type="component" value="Chromosome 12"/>
</dbReference>
<dbReference type="GO" id="GO:0005615">
    <property type="term" value="C:extracellular space"/>
    <property type="evidence" value="ECO:0000318"/>
    <property type="project" value="GO_Central"/>
</dbReference>
<dbReference type="GO" id="GO:0051216">
    <property type="term" value="P:cartilage development"/>
    <property type="evidence" value="ECO:0007669"/>
    <property type="project" value="UniProtKB-KW"/>
</dbReference>
<dbReference type="GO" id="GO:0035844">
    <property type="term" value="P:cloaca development"/>
    <property type="evidence" value="ECO:0000315"/>
    <property type="project" value="ZFIN"/>
</dbReference>
<dbReference type="GO" id="GO:0007368">
    <property type="term" value="P:determination of left/right symmetry"/>
    <property type="evidence" value="ECO:0000315"/>
    <property type="project" value="ZFIN"/>
</dbReference>
<dbReference type="GO" id="GO:0009953">
    <property type="term" value="P:dorsal/ventral pattern formation"/>
    <property type="evidence" value="ECO:0000315"/>
    <property type="project" value="ZFIN"/>
</dbReference>
<dbReference type="GO" id="GO:0048703">
    <property type="term" value="P:embryonic viscerocranium morphogenesis"/>
    <property type="evidence" value="ECO:0000315"/>
    <property type="project" value="ZFIN"/>
</dbReference>
<dbReference type="GO" id="GO:0030514">
    <property type="term" value="P:negative regulation of BMP signaling pathway"/>
    <property type="evidence" value="ECO:0000315"/>
    <property type="project" value="ZFIN"/>
</dbReference>
<dbReference type="GO" id="GO:0045596">
    <property type="term" value="P:negative regulation of cell differentiation"/>
    <property type="evidence" value="ECO:0007669"/>
    <property type="project" value="InterPro"/>
</dbReference>
<dbReference type="GO" id="GO:0001649">
    <property type="term" value="P:osteoblast differentiation"/>
    <property type="evidence" value="ECO:0000318"/>
    <property type="project" value="GO_Central"/>
</dbReference>
<dbReference type="GO" id="GO:0048793">
    <property type="term" value="P:pronephros development"/>
    <property type="evidence" value="ECO:0000315"/>
    <property type="project" value="ZFIN"/>
</dbReference>
<dbReference type="FunFam" id="1.10.287.520:FF:000001">
    <property type="entry name" value="Noggin"/>
    <property type="match status" value="1"/>
</dbReference>
<dbReference type="Gene3D" id="2.10.90.10">
    <property type="entry name" value="Cystine-knot cytokines"/>
    <property type="match status" value="1"/>
</dbReference>
<dbReference type="Gene3D" id="1.10.287.520">
    <property type="entry name" value="Helix hairpin bin"/>
    <property type="match status" value="1"/>
</dbReference>
<dbReference type="InterPro" id="IPR029034">
    <property type="entry name" value="Cystine-knot_cytokine"/>
</dbReference>
<dbReference type="InterPro" id="IPR008717">
    <property type="entry name" value="Noggin"/>
</dbReference>
<dbReference type="PANTHER" id="PTHR10494">
    <property type="entry name" value="BONE MORPHOGENETIC PROTEIN INHIBITOR, NOGGIN"/>
    <property type="match status" value="1"/>
</dbReference>
<dbReference type="PANTHER" id="PTHR10494:SF5">
    <property type="entry name" value="NOGGIN"/>
    <property type="match status" value="1"/>
</dbReference>
<dbReference type="Pfam" id="PF05806">
    <property type="entry name" value="Noggin"/>
    <property type="match status" value="1"/>
</dbReference>
<dbReference type="PIRSF" id="PIRSF008129">
    <property type="entry name" value="Noggin"/>
    <property type="match status" value="1"/>
</dbReference>
<dbReference type="SUPFAM" id="SSF57501">
    <property type="entry name" value="Cystine-knot cytokines"/>
    <property type="match status" value="1"/>
</dbReference>